<keyword id="KW-0235">DNA replication</keyword>
<keyword id="KW-0238">DNA-binding</keyword>
<keyword id="KW-0539">Nucleus</keyword>
<keyword id="KW-1185">Reference proteome</keyword>
<gene>
    <name type="primary">DPB2</name>
    <name type="ordered locus">DEHA2E02838g</name>
</gene>
<proteinExistence type="inferred from homology"/>
<reference key="1">
    <citation type="journal article" date="2004" name="Nature">
        <title>Genome evolution in yeasts.</title>
        <authorList>
            <person name="Dujon B."/>
            <person name="Sherman D."/>
            <person name="Fischer G."/>
            <person name="Durrens P."/>
            <person name="Casaregola S."/>
            <person name="Lafontaine I."/>
            <person name="de Montigny J."/>
            <person name="Marck C."/>
            <person name="Neuveglise C."/>
            <person name="Talla E."/>
            <person name="Goffard N."/>
            <person name="Frangeul L."/>
            <person name="Aigle M."/>
            <person name="Anthouard V."/>
            <person name="Babour A."/>
            <person name="Barbe V."/>
            <person name="Barnay S."/>
            <person name="Blanchin S."/>
            <person name="Beckerich J.-M."/>
            <person name="Beyne E."/>
            <person name="Bleykasten C."/>
            <person name="Boisrame A."/>
            <person name="Boyer J."/>
            <person name="Cattolico L."/>
            <person name="Confanioleri F."/>
            <person name="de Daruvar A."/>
            <person name="Despons L."/>
            <person name="Fabre E."/>
            <person name="Fairhead C."/>
            <person name="Ferry-Dumazet H."/>
            <person name="Groppi A."/>
            <person name="Hantraye F."/>
            <person name="Hennequin C."/>
            <person name="Jauniaux N."/>
            <person name="Joyet P."/>
            <person name="Kachouri R."/>
            <person name="Kerrest A."/>
            <person name="Koszul R."/>
            <person name="Lemaire M."/>
            <person name="Lesur I."/>
            <person name="Ma L."/>
            <person name="Muller H."/>
            <person name="Nicaud J.-M."/>
            <person name="Nikolski M."/>
            <person name="Oztas S."/>
            <person name="Ozier-Kalogeropoulos O."/>
            <person name="Pellenz S."/>
            <person name="Potier S."/>
            <person name="Richard G.-F."/>
            <person name="Straub M.-L."/>
            <person name="Suleau A."/>
            <person name="Swennen D."/>
            <person name="Tekaia F."/>
            <person name="Wesolowski-Louvel M."/>
            <person name="Westhof E."/>
            <person name="Wirth B."/>
            <person name="Zeniou-Meyer M."/>
            <person name="Zivanovic Y."/>
            <person name="Bolotin-Fukuhara M."/>
            <person name="Thierry A."/>
            <person name="Bouchier C."/>
            <person name="Caudron B."/>
            <person name="Scarpelli C."/>
            <person name="Gaillardin C."/>
            <person name="Weissenbach J."/>
            <person name="Wincker P."/>
            <person name="Souciet J.-L."/>
        </authorList>
    </citation>
    <scope>NUCLEOTIDE SEQUENCE [LARGE SCALE GENOMIC DNA]</scope>
    <source>
        <strain>ATCC 36239 / CBS 767 / BCRC 21394 / JCM 1990 / NBRC 0083 / IGC 2968</strain>
    </source>
</reference>
<sequence length="669" mass="75781">MENPSALPIKLQPSNLRPIAYRILSKKHGLNIQTDALKLLTDAVSYKFGFDWKSTQSQQFLEEIAKIWKKQDRGIFIDGPGLKQVIKELSDRNTNQISTRNGSADNLAKKAERSDTLVDNDAENEPVNNAENTLNWQDYFKVINPDEQPNYKYDKHRKQLSFIPSTNAKRLANNLNSNVDYFNNRYHLISDRLSRNENFQKPSFSSISSISKSLSHNNKTNEITLIKNVLGRDGSKFILFGLLSKNANDDFILEDSTDHIELNLTQAYKTEGSFYCPGMFVIVEGIYSASGGSMSNANVIGGCFHVSNIGHPPAERRELSMENYGNLDFMGINRDNDTNNNDNHILRVNKSLKKKLVSLEKTLVNHKLIILGSDCFLDDLKILDGIKKLFGKIESSLIDDETNQPLVIVLIGSFTSNPLTPTNSSVANVSNTENYKSNFDNLSNILSNFPNIVQKVKIALIPGINDPWQSSHSLGGSNLNAFPQRSIPKIFTNRLERLLPKGNLIAGWNPLRINYLSQEIVLMKDDIINKFKRNDIIFSNDLELEQLKLQKDKNDDGLIHATDINTKEPHISPKIKQARKLVKTILDQGNLQPFLKDIRIINTNFDYSLRIEPLPTILILNDATFPTFEVTYNGCKVINTGKLVGNNRKLSFVEYFPSGKKFEFKEVYF</sequence>
<comment type="function">
    <text evidence="2">As accessory component of the DNA polymerase epsilon (DNA polymerase II) participates in chromosomal DNA replication.</text>
</comment>
<comment type="subunit">
    <text evidence="1">Heterotetramer. Consists of four subunits: POL2, DPB2, DPB3 and DPB4 (By similarity).</text>
</comment>
<comment type="subcellular location">
    <subcellularLocation>
        <location evidence="1">Nucleus</location>
    </subcellularLocation>
</comment>
<comment type="miscellaneous">
    <text>In eukaryotes there are five DNA polymerases: alpha, beta, gamma, delta, and epsilon which are responsible for different reactions of DNA synthesis.</text>
</comment>
<comment type="similarity">
    <text evidence="4">Belongs to the DNA polymerase epsilon subunit B family.</text>
</comment>
<organism>
    <name type="scientific">Debaryomyces hansenii (strain ATCC 36239 / CBS 767 / BCRC 21394 / JCM 1990 / NBRC 0083 / IGC 2968)</name>
    <name type="common">Yeast</name>
    <name type="synonym">Torulaspora hansenii</name>
    <dbReference type="NCBI Taxonomy" id="284592"/>
    <lineage>
        <taxon>Eukaryota</taxon>
        <taxon>Fungi</taxon>
        <taxon>Dikarya</taxon>
        <taxon>Ascomycota</taxon>
        <taxon>Saccharomycotina</taxon>
        <taxon>Pichiomycetes</taxon>
        <taxon>Debaryomycetaceae</taxon>
        <taxon>Debaryomyces</taxon>
    </lineage>
</organism>
<evidence type="ECO:0000250" key="1"/>
<evidence type="ECO:0000250" key="2">
    <source>
        <dbReference type="UniProtKB" id="P24482"/>
    </source>
</evidence>
<evidence type="ECO:0000256" key="3">
    <source>
        <dbReference type="SAM" id="MobiDB-lite"/>
    </source>
</evidence>
<evidence type="ECO:0000305" key="4"/>
<name>DPB2_DEBHA</name>
<protein>
    <recommendedName>
        <fullName>DNA polymerase epsilon subunit B</fullName>
    </recommendedName>
    <alternativeName>
        <fullName>DNA polymerase II subunit 2</fullName>
    </alternativeName>
</protein>
<feature type="chain" id="PRO_0000071569" description="DNA polymerase epsilon subunit B">
    <location>
        <begin position="1"/>
        <end position="669"/>
    </location>
</feature>
<feature type="region of interest" description="Disordered" evidence="3">
    <location>
        <begin position="96"/>
        <end position="115"/>
    </location>
</feature>
<dbReference type="EMBL" id="CR382137">
    <property type="protein sequence ID" value="CAG87668.1"/>
    <property type="molecule type" value="Genomic_DNA"/>
</dbReference>
<dbReference type="RefSeq" id="XP_459452.1">
    <property type="nucleotide sequence ID" value="XM_459452.1"/>
</dbReference>
<dbReference type="SMR" id="Q6BQR8"/>
<dbReference type="FunCoup" id="Q6BQR8">
    <property type="interactions" value="812"/>
</dbReference>
<dbReference type="STRING" id="284592.Q6BQR8"/>
<dbReference type="GeneID" id="2902070"/>
<dbReference type="KEGG" id="dha:DEHA2E02838g"/>
<dbReference type="VEuPathDB" id="FungiDB:DEHA2E02838g"/>
<dbReference type="eggNOG" id="KOG3818">
    <property type="taxonomic scope" value="Eukaryota"/>
</dbReference>
<dbReference type="HOGENOM" id="CLU_010628_1_0_1"/>
<dbReference type="InParanoid" id="Q6BQR8"/>
<dbReference type="OMA" id="PEDGAWF"/>
<dbReference type="OrthoDB" id="10254730at2759"/>
<dbReference type="Proteomes" id="UP000000599">
    <property type="component" value="Chromosome E"/>
</dbReference>
<dbReference type="GO" id="GO:0005737">
    <property type="term" value="C:cytoplasm"/>
    <property type="evidence" value="ECO:0007669"/>
    <property type="project" value="EnsemblFungi"/>
</dbReference>
<dbReference type="GO" id="GO:0008622">
    <property type="term" value="C:epsilon DNA polymerase complex"/>
    <property type="evidence" value="ECO:0007669"/>
    <property type="project" value="EnsemblFungi"/>
</dbReference>
<dbReference type="GO" id="GO:0043596">
    <property type="term" value="C:nuclear replication fork"/>
    <property type="evidence" value="ECO:0007669"/>
    <property type="project" value="EnsemblFungi"/>
</dbReference>
<dbReference type="GO" id="GO:0030337">
    <property type="term" value="F:DNA polymerase processivity factor activity"/>
    <property type="evidence" value="ECO:0007669"/>
    <property type="project" value="EnsemblFungi"/>
</dbReference>
<dbReference type="GO" id="GO:0003887">
    <property type="term" value="F:DNA-directed DNA polymerase activity"/>
    <property type="evidence" value="ECO:0007669"/>
    <property type="project" value="EnsemblFungi"/>
</dbReference>
<dbReference type="GO" id="GO:0003690">
    <property type="term" value="F:double-stranded DNA binding"/>
    <property type="evidence" value="ECO:0007669"/>
    <property type="project" value="EnsemblFungi"/>
</dbReference>
<dbReference type="GO" id="GO:0003697">
    <property type="term" value="F:single-stranded DNA binding"/>
    <property type="evidence" value="ECO:0007669"/>
    <property type="project" value="EnsemblFungi"/>
</dbReference>
<dbReference type="GO" id="GO:0045005">
    <property type="term" value="P:DNA-templated DNA replication maintenance of fidelity"/>
    <property type="evidence" value="ECO:0007669"/>
    <property type="project" value="EnsemblFungi"/>
</dbReference>
<dbReference type="GO" id="GO:0042276">
    <property type="term" value="P:error-prone translesion synthesis"/>
    <property type="evidence" value="ECO:0007669"/>
    <property type="project" value="EnsemblFungi"/>
</dbReference>
<dbReference type="InterPro" id="IPR007185">
    <property type="entry name" value="DNA_pol_a/d/e_bsu"/>
</dbReference>
<dbReference type="InterPro" id="IPR016266">
    <property type="entry name" value="POLE2"/>
</dbReference>
<dbReference type="PANTHER" id="PTHR12708:SF0">
    <property type="entry name" value="DNA POLYMERASE EPSILON SUBUNIT 2"/>
    <property type="match status" value="1"/>
</dbReference>
<dbReference type="PANTHER" id="PTHR12708">
    <property type="entry name" value="DNA POLYMERASE EPSILON SUBUNIT B"/>
    <property type="match status" value="1"/>
</dbReference>
<dbReference type="Pfam" id="PF04042">
    <property type="entry name" value="DNA_pol_E_B"/>
    <property type="match status" value="1"/>
</dbReference>
<accession>Q6BQR8</accession>